<name>GAL1_SHIFL</name>
<dbReference type="EC" id="2.7.1.6" evidence="2"/>
<dbReference type="EMBL" id="AE005674">
    <property type="protein sequence ID" value="AAN42191.1"/>
    <property type="molecule type" value="Genomic_DNA"/>
</dbReference>
<dbReference type="EMBL" id="AE014073">
    <property type="protein sequence ID" value="AAP16064.1"/>
    <property type="molecule type" value="Genomic_DNA"/>
</dbReference>
<dbReference type="RefSeq" id="NP_706484.1">
    <property type="nucleotide sequence ID" value="NC_004337.2"/>
</dbReference>
<dbReference type="RefSeq" id="WP_000053437.1">
    <property type="nucleotide sequence ID" value="NZ_WPGW01000046.1"/>
</dbReference>
<dbReference type="SMR" id="Q83M01"/>
<dbReference type="STRING" id="198214.SF0547"/>
<dbReference type="PaxDb" id="198214-SF0547"/>
<dbReference type="GeneID" id="1023445"/>
<dbReference type="GeneID" id="93776724"/>
<dbReference type="KEGG" id="sfl:SF0547"/>
<dbReference type="KEGG" id="sfx:S0555"/>
<dbReference type="PATRIC" id="fig|198214.7.peg.636"/>
<dbReference type="HOGENOM" id="CLU_017814_2_1_6"/>
<dbReference type="UniPathway" id="UPA00214"/>
<dbReference type="Proteomes" id="UP000001006">
    <property type="component" value="Chromosome"/>
</dbReference>
<dbReference type="Proteomes" id="UP000002673">
    <property type="component" value="Chromosome"/>
</dbReference>
<dbReference type="GO" id="GO:0005829">
    <property type="term" value="C:cytosol"/>
    <property type="evidence" value="ECO:0007669"/>
    <property type="project" value="TreeGrafter"/>
</dbReference>
<dbReference type="GO" id="GO:0005524">
    <property type="term" value="F:ATP binding"/>
    <property type="evidence" value="ECO:0007669"/>
    <property type="project" value="UniProtKB-UniRule"/>
</dbReference>
<dbReference type="GO" id="GO:0004335">
    <property type="term" value="F:galactokinase activity"/>
    <property type="evidence" value="ECO:0007669"/>
    <property type="project" value="UniProtKB-UniRule"/>
</dbReference>
<dbReference type="GO" id="GO:0000287">
    <property type="term" value="F:magnesium ion binding"/>
    <property type="evidence" value="ECO:0007669"/>
    <property type="project" value="UniProtKB-UniRule"/>
</dbReference>
<dbReference type="GO" id="GO:0006012">
    <property type="term" value="P:galactose metabolic process"/>
    <property type="evidence" value="ECO:0007669"/>
    <property type="project" value="UniProtKB-UniRule"/>
</dbReference>
<dbReference type="FunFam" id="3.30.230.10:FF:000017">
    <property type="entry name" value="Galactokinase"/>
    <property type="match status" value="1"/>
</dbReference>
<dbReference type="FunFam" id="3.30.70.890:FF:000001">
    <property type="entry name" value="Galactokinase"/>
    <property type="match status" value="1"/>
</dbReference>
<dbReference type="Gene3D" id="3.30.230.10">
    <property type="match status" value="1"/>
</dbReference>
<dbReference type="Gene3D" id="3.30.70.890">
    <property type="entry name" value="GHMP kinase, C-terminal domain"/>
    <property type="match status" value="1"/>
</dbReference>
<dbReference type="HAMAP" id="MF_00246">
    <property type="entry name" value="Galactokinase"/>
    <property type="match status" value="1"/>
</dbReference>
<dbReference type="InterPro" id="IPR000705">
    <property type="entry name" value="Galactokinase"/>
</dbReference>
<dbReference type="InterPro" id="IPR022963">
    <property type="entry name" value="Galactokinase_bac"/>
</dbReference>
<dbReference type="InterPro" id="IPR019741">
    <property type="entry name" value="Galactokinase_CS"/>
</dbReference>
<dbReference type="InterPro" id="IPR019539">
    <property type="entry name" value="GalKase_N"/>
</dbReference>
<dbReference type="InterPro" id="IPR013750">
    <property type="entry name" value="GHMP_kinase_C_dom"/>
</dbReference>
<dbReference type="InterPro" id="IPR036554">
    <property type="entry name" value="GHMP_kinase_C_sf"/>
</dbReference>
<dbReference type="InterPro" id="IPR006204">
    <property type="entry name" value="GHMP_kinase_N_dom"/>
</dbReference>
<dbReference type="InterPro" id="IPR006203">
    <property type="entry name" value="GHMP_knse_ATP-bd_CS"/>
</dbReference>
<dbReference type="InterPro" id="IPR006206">
    <property type="entry name" value="Mevalonate/galactokinase"/>
</dbReference>
<dbReference type="InterPro" id="IPR020568">
    <property type="entry name" value="Ribosomal_Su5_D2-typ_SF"/>
</dbReference>
<dbReference type="InterPro" id="IPR014721">
    <property type="entry name" value="Ribsml_uS5_D2-typ_fold_subgr"/>
</dbReference>
<dbReference type="NCBIfam" id="TIGR00131">
    <property type="entry name" value="gal_kin"/>
    <property type="match status" value="1"/>
</dbReference>
<dbReference type="NCBIfam" id="NF003472">
    <property type="entry name" value="PRK05101.1"/>
    <property type="match status" value="1"/>
</dbReference>
<dbReference type="PANTHER" id="PTHR10457:SF7">
    <property type="entry name" value="GALACTOKINASE-RELATED"/>
    <property type="match status" value="1"/>
</dbReference>
<dbReference type="PANTHER" id="PTHR10457">
    <property type="entry name" value="MEVALONATE KINASE/GALACTOKINASE"/>
    <property type="match status" value="1"/>
</dbReference>
<dbReference type="Pfam" id="PF10509">
    <property type="entry name" value="GalKase_gal_bdg"/>
    <property type="match status" value="1"/>
</dbReference>
<dbReference type="Pfam" id="PF08544">
    <property type="entry name" value="GHMP_kinases_C"/>
    <property type="match status" value="1"/>
</dbReference>
<dbReference type="Pfam" id="PF00288">
    <property type="entry name" value="GHMP_kinases_N"/>
    <property type="match status" value="1"/>
</dbReference>
<dbReference type="PIRSF" id="PIRSF000530">
    <property type="entry name" value="Galactokinase"/>
    <property type="match status" value="1"/>
</dbReference>
<dbReference type="PRINTS" id="PR00473">
    <property type="entry name" value="GALCTOKINASE"/>
</dbReference>
<dbReference type="PRINTS" id="PR00959">
    <property type="entry name" value="MEVGALKINASE"/>
</dbReference>
<dbReference type="SUPFAM" id="SSF55060">
    <property type="entry name" value="GHMP Kinase, C-terminal domain"/>
    <property type="match status" value="1"/>
</dbReference>
<dbReference type="SUPFAM" id="SSF54211">
    <property type="entry name" value="Ribosomal protein S5 domain 2-like"/>
    <property type="match status" value="1"/>
</dbReference>
<dbReference type="PROSITE" id="PS00106">
    <property type="entry name" value="GALACTOKINASE"/>
    <property type="match status" value="1"/>
</dbReference>
<dbReference type="PROSITE" id="PS00627">
    <property type="entry name" value="GHMP_KINASES_ATP"/>
    <property type="match status" value="1"/>
</dbReference>
<evidence type="ECO:0000250" key="1"/>
<evidence type="ECO:0000255" key="2">
    <source>
        <dbReference type="HAMAP-Rule" id="MF_00246"/>
    </source>
</evidence>
<feature type="initiator methionine" description="Removed" evidence="1">
    <location>
        <position position="1"/>
    </location>
</feature>
<feature type="chain" id="PRO_0000184623" description="Galactokinase">
    <location>
        <begin position="2"/>
        <end position="382"/>
    </location>
</feature>
<feature type="active site" description="Proton acceptor" evidence="2">
    <location>
        <position position="174"/>
    </location>
</feature>
<feature type="binding site" evidence="2">
    <location>
        <begin position="34"/>
        <end position="37"/>
    </location>
    <ligand>
        <name>substrate</name>
    </ligand>
</feature>
<feature type="binding site" evidence="2">
    <location>
        <begin position="124"/>
        <end position="130"/>
    </location>
    <ligand>
        <name>ATP</name>
        <dbReference type="ChEBI" id="CHEBI:30616"/>
    </ligand>
</feature>
<feature type="binding site" evidence="2">
    <location>
        <position position="130"/>
    </location>
    <ligand>
        <name>Mg(2+)</name>
        <dbReference type="ChEBI" id="CHEBI:18420"/>
    </ligand>
</feature>
<feature type="binding site" evidence="2">
    <location>
        <position position="162"/>
    </location>
    <ligand>
        <name>Mg(2+)</name>
        <dbReference type="ChEBI" id="CHEBI:18420"/>
    </ligand>
</feature>
<feature type="binding site" evidence="2">
    <location>
        <position position="223"/>
    </location>
    <ligand>
        <name>substrate</name>
    </ligand>
</feature>
<feature type="site" description="Transition state stabilizer" evidence="2">
    <location>
        <position position="28"/>
    </location>
</feature>
<sequence>MSLKEKTQSLFANAFGYPATHTIQAPGRVNLIGEHTDYNDGFVLPCAIDYQTVISCAPRDDRKVRVMAADYENQLDEFSLNAPIVAHENYQWANYVRGVVKHLQLRNNSFGGVDMVISGNVPQGAGLSSSASLEVAVGTVLQQLYHLPLDGAQIALNGQEAENQFVGCNCGIMDQLISALGKKDHALLIDCRSLGTKAVSMPKGVAVVIINSNFKRTLVGSEYNTRREQCETGARFFQQPALRDVTIEEFNAVAHELDPIVAKRVRHILTENARTVEAASALEQGDLKRMGELMAESHASMRDDFEITVPQIDTLVEIVKAVIGDKGGVRMTGGGFGGCIVALIPEELVPAVQQAVAEQYEAKTGIKETFYVCKPSQGAGQC</sequence>
<protein>
    <recommendedName>
        <fullName evidence="2">Galactokinase</fullName>
        <ecNumber evidence="2">2.7.1.6</ecNumber>
    </recommendedName>
    <alternativeName>
        <fullName evidence="2">Galactose kinase</fullName>
    </alternativeName>
</protein>
<organism>
    <name type="scientific">Shigella flexneri</name>
    <dbReference type="NCBI Taxonomy" id="623"/>
    <lineage>
        <taxon>Bacteria</taxon>
        <taxon>Pseudomonadati</taxon>
        <taxon>Pseudomonadota</taxon>
        <taxon>Gammaproteobacteria</taxon>
        <taxon>Enterobacterales</taxon>
        <taxon>Enterobacteriaceae</taxon>
        <taxon>Shigella</taxon>
    </lineage>
</organism>
<keyword id="KW-0067">ATP-binding</keyword>
<keyword id="KW-0119">Carbohydrate metabolism</keyword>
<keyword id="KW-0963">Cytoplasm</keyword>
<keyword id="KW-0299">Galactose metabolism</keyword>
<keyword id="KW-0418">Kinase</keyword>
<keyword id="KW-0460">Magnesium</keyword>
<keyword id="KW-0479">Metal-binding</keyword>
<keyword id="KW-0547">Nucleotide-binding</keyword>
<keyword id="KW-1185">Reference proteome</keyword>
<keyword id="KW-0808">Transferase</keyword>
<proteinExistence type="inferred from homology"/>
<gene>
    <name evidence="2" type="primary">galK</name>
    <name type="ordered locus">SF0547</name>
    <name type="ordered locus">S0555</name>
</gene>
<reference key="1">
    <citation type="journal article" date="2002" name="Nucleic Acids Res.">
        <title>Genome sequence of Shigella flexneri 2a: insights into pathogenicity through comparison with genomes of Escherichia coli K12 and O157.</title>
        <authorList>
            <person name="Jin Q."/>
            <person name="Yuan Z."/>
            <person name="Xu J."/>
            <person name="Wang Y."/>
            <person name="Shen Y."/>
            <person name="Lu W."/>
            <person name="Wang J."/>
            <person name="Liu H."/>
            <person name="Yang J."/>
            <person name="Yang F."/>
            <person name="Zhang X."/>
            <person name="Zhang J."/>
            <person name="Yang G."/>
            <person name="Wu H."/>
            <person name="Qu D."/>
            <person name="Dong J."/>
            <person name="Sun L."/>
            <person name="Xue Y."/>
            <person name="Zhao A."/>
            <person name="Gao Y."/>
            <person name="Zhu J."/>
            <person name="Kan B."/>
            <person name="Ding K."/>
            <person name="Chen S."/>
            <person name="Cheng H."/>
            <person name="Yao Z."/>
            <person name="He B."/>
            <person name="Chen R."/>
            <person name="Ma D."/>
            <person name="Qiang B."/>
            <person name="Wen Y."/>
            <person name="Hou Y."/>
            <person name="Yu J."/>
        </authorList>
    </citation>
    <scope>NUCLEOTIDE SEQUENCE [LARGE SCALE GENOMIC DNA]</scope>
    <source>
        <strain>301 / Serotype 2a</strain>
    </source>
</reference>
<reference key="2">
    <citation type="journal article" date="2003" name="Infect. Immun.">
        <title>Complete genome sequence and comparative genomics of Shigella flexneri serotype 2a strain 2457T.</title>
        <authorList>
            <person name="Wei J."/>
            <person name="Goldberg M.B."/>
            <person name="Burland V."/>
            <person name="Venkatesan M.M."/>
            <person name="Deng W."/>
            <person name="Fournier G."/>
            <person name="Mayhew G.F."/>
            <person name="Plunkett G. III"/>
            <person name="Rose D.J."/>
            <person name="Darling A."/>
            <person name="Mau B."/>
            <person name="Perna N.T."/>
            <person name="Payne S.M."/>
            <person name="Runyen-Janecky L.J."/>
            <person name="Zhou S."/>
            <person name="Schwartz D.C."/>
            <person name="Blattner F.R."/>
        </authorList>
    </citation>
    <scope>NUCLEOTIDE SEQUENCE [LARGE SCALE GENOMIC DNA]</scope>
    <source>
        <strain>ATCC 700930 / 2457T / Serotype 2a</strain>
    </source>
</reference>
<accession>Q83M01</accession>
<comment type="function">
    <text evidence="2">Catalyzes the transfer of the gamma-phosphate of ATP to D-galactose to form alpha-D-galactose-1-phosphate (Gal-1-P).</text>
</comment>
<comment type="catalytic activity">
    <reaction evidence="2">
        <text>alpha-D-galactose + ATP = alpha-D-galactose 1-phosphate + ADP + H(+)</text>
        <dbReference type="Rhea" id="RHEA:13553"/>
        <dbReference type="ChEBI" id="CHEBI:15378"/>
        <dbReference type="ChEBI" id="CHEBI:28061"/>
        <dbReference type="ChEBI" id="CHEBI:30616"/>
        <dbReference type="ChEBI" id="CHEBI:58336"/>
        <dbReference type="ChEBI" id="CHEBI:456216"/>
        <dbReference type="EC" id="2.7.1.6"/>
    </reaction>
</comment>
<comment type="pathway">
    <text evidence="2">Carbohydrate metabolism; galactose metabolism.</text>
</comment>
<comment type="subcellular location">
    <subcellularLocation>
        <location evidence="2">Cytoplasm</location>
    </subcellularLocation>
</comment>
<comment type="similarity">
    <text evidence="2">Belongs to the GHMP kinase family. GalK subfamily.</text>
</comment>